<keyword id="KW-0067">ATP-binding</keyword>
<keyword id="KW-0238">DNA-binding</keyword>
<keyword id="KW-0479">Metal-binding</keyword>
<keyword id="KW-0547">Nucleotide-binding</keyword>
<keyword id="KW-1185">Reference proteome</keyword>
<keyword id="KW-0678">Repressor</keyword>
<keyword id="KW-0804">Transcription</keyword>
<keyword id="KW-0805">Transcription regulation</keyword>
<keyword id="KW-0862">Zinc</keyword>
<keyword id="KW-0863">Zinc-finger</keyword>
<accession>Q03RK0</accession>
<sequence>MQCPHCHHNGSRVVDSRPTDDGRVIRRRRECESCGFRFTTFERVEVTPLLVIKKNGTREEFNREKVLRGIIRSAEKRPVGMDVMTQIVDEVENKIRALGVSEISSQLIGEYVMNRLVDVDEIAYIRFASVYRQFKDTGVFFNELKDMLDKDKLKAKKETNGKSEAK</sequence>
<name>NRDR_LEVBA</name>
<organism>
    <name type="scientific">Levilactobacillus brevis (strain ATCC 367 / BCRC 12310 / CIP 105137 / JCM 1170 / LMG 11437 / NCIMB 947 / NCTC 947)</name>
    <name type="common">Lactobacillus brevis</name>
    <dbReference type="NCBI Taxonomy" id="387344"/>
    <lineage>
        <taxon>Bacteria</taxon>
        <taxon>Bacillati</taxon>
        <taxon>Bacillota</taxon>
        <taxon>Bacilli</taxon>
        <taxon>Lactobacillales</taxon>
        <taxon>Lactobacillaceae</taxon>
        <taxon>Levilactobacillus</taxon>
    </lineage>
</organism>
<gene>
    <name evidence="1" type="primary">nrdR</name>
    <name type="ordered locus">LVIS_1039</name>
</gene>
<dbReference type="EMBL" id="CP000416">
    <property type="protein sequence ID" value="ABJ64172.1"/>
    <property type="molecule type" value="Genomic_DNA"/>
</dbReference>
<dbReference type="RefSeq" id="WP_011667802.1">
    <property type="nucleotide sequence ID" value="NC_008497.1"/>
</dbReference>
<dbReference type="SMR" id="Q03RK0"/>
<dbReference type="STRING" id="387344.LVIS_1039"/>
<dbReference type="GeneID" id="56992740"/>
<dbReference type="KEGG" id="lbr:LVIS_1039"/>
<dbReference type="eggNOG" id="COG1327">
    <property type="taxonomic scope" value="Bacteria"/>
</dbReference>
<dbReference type="HOGENOM" id="CLU_108412_0_0_9"/>
<dbReference type="Proteomes" id="UP000001652">
    <property type="component" value="Chromosome"/>
</dbReference>
<dbReference type="GO" id="GO:0005524">
    <property type="term" value="F:ATP binding"/>
    <property type="evidence" value="ECO:0007669"/>
    <property type="project" value="UniProtKB-KW"/>
</dbReference>
<dbReference type="GO" id="GO:0003677">
    <property type="term" value="F:DNA binding"/>
    <property type="evidence" value="ECO:0007669"/>
    <property type="project" value="UniProtKB-KW"/>
</dbReference>
<dbReference type="GO" id="GO:0008270">
    <property type="term" value="F:zinc ion binding"/>
    <property type="evidence" value="ECO:0007669"/>
    <property type="project" value="UniProtKB-UniRule"/>
</dbReference>
<dbReference type="GO" id="GO:0045892">
    <property type="term" value="P:negative regulation of DNA-templated transcription"/>
    <property type="evidence" value="ECO:0007669"/>
    <property type="project" value="UniProtKB-UniRule"/>
</dbReference>
<dbReference type="HAMAP" id="MF_00440">
    <property type="entry name" value="NrdR"/>
    <property type="match status" value="1"/>
</dbReference>
<dbReference type="InterPro" id="IPR005144">
    <property type="entry name" value="ATP-cone_dom"/>
</dbReference>
<dbReference type="InterPro" id="IPR055173">
    <property type="entry name" value="NrdR-like_N"/>
</dbReference>
<dbReference type="InterPro" id="IPR003796">
    <property type="entry name" value="RNR_NrdR-like"/>
</dbReference>
<dbReference type="NCBIfam" id="TIGR00244">
    <property type="entry name" value="transcriptional regulator NrdR"/>
    <property type="match status" value="1"/>
</dbReference>
<dbReference type="PANTHER" id="PTHR30455">
    <property type="entry name" value="TRANSCRIPTIONAL REPRESSOR NRDR"/>
    <property type="match status" value="1"/>
</dbReference>
<dbReference type="PANTHER" id="PTHR30455:SF2">
    <property type="entry name" value="TRANSCRIPTIONAL REPRESSOR NRDR"/>
    <property type="match status" value="1"/>
</dbReference>
<dbReference type="Pfam" id="PF03477">
    <property type="entry name" value="ATP-cone"/>
    <property type="match status" value="1"/>
</dbReference>
<dbReference type="Pfam" id="PF22811">
    <property type="entry name" value="Zn_ribbon_NrdR"/>
    <property type="match status" value="1"/>
</dbReference>
<dbReference type="PROSITE" id="PS51161">
    <property type="entry name" value="ATP_CONE"/>
    <property type="match status" value="1"/>
</dbReference>
<proteinExistence type="inferred from homology"/>
<reference key="1">
    <citation type="journal article" date="2006" name="Proc. Natl. Acad. Sci. U.S.A.">
        <title>Comparative genomics of the lactic acid bacteria.</title>
        <authorList>
            <person name="Makarova K.S."/>
            <person name="Slesarev A."/>
            <person name="Wolf Y.I."/>
            <person name="Sorokin A."/>
            <person name="Mirkin B."/>
            <person name="Koonin E.V."/>
            <person name="Pavlov A."/>
            <person name="Pavlova N."/>
            <person name="Karamychev V."/>
            <person name="Polouchine N."/>
            <person name="Shakhova V."/>
            <person name="Grigoriev I."/>
            <person name="Lou Y."/>
            <person name="Rohksar D."/>
            <person name="Lucas S."/>
            <person name="Huang K."/>
            <person name="Goodstein D.M."/>
            <person name="Hawkins T."/>
            <person name="Plengvidhya V."/>
            <person name="Welker D."/>
            <person name="Hughes J."/>
            <person name="Goh Y."/>
            <person name="Benson A."/>
            <person name="Baldwin K."/>
            <person name="Lee J.-H."/>
            <person name="Diaz-Muniz I."/>
            <person name="Dosti B."/>
            <person name="Smeianov V."/>
            <person name="Wechter W."/>
            <person name="Barabote R."/>
            <person name="Lorca G."/>
            <person name="Altermann E."/>
            <person name="Barrangou R."/>
            <person name="Ganesan B."/>
            <person name="Xie Y."/>
            <person name="Rawsthorne H."/>
            <person name="Tamir D."/>
            <person name="Parker C."/>
            <person name="Breidt F."/>
            <person name="Broadbent J.R."/>
            <person name="Hutkins R."/>
            <person name="O'Sullivan D."/>
            <person name="Steele J."/>
            <person name="Unlu G."/>
            <person name="Saier M.H. Jr."/>
            <person name="Klaenhammer T."/>
            <person name="Richardson P."/>
            <person name="Kozyavkin S."/>
            <person name="Weimer B.C."/>
            <person name="Mills D.A."/>
        </authorList>
    </citation>
    <scope>NUCLEOTIDE SEQUENCE [LARGE SCALE GENOMIC DNA]</scope>
    <source>
        <strain>ATCC 367 / BCRC 12310 / CIP 105137 / JCM 1170 / LMG 11437 / NCIMB 947 / NCTC 947</strain>
    </source>
</reference>
<comment type="function">
    <text evidence="1">Negatively regulates transcription of bacterial ribonucleotide reductase nrd genes and operons by binding to NrdR-boxes.</text>
</comment>
<comment type="cofactor">
    <cofactor evidence="1">
        <name>Zn(2+)</name>
        <dbReference type="ChEBI" id="CHEBI:29105"/>
    </cofactor>
    <text evidence="1">Binds 1 zinc ion.</text>
</comment>
<comment type="similarity">
    <text evidence="1">Belongs to the NrdR family.</text>
</comment>
<evidence type="ECO:0000255" key="1">
    <source>
        <dbReference type="HAMAP-Rule" id="MF_00440"/>
    </source>
</evidence>
<protein>
    <recommendedName>
        <fullName evidence="1">Transcriptional repressor NrdR</fullName>
    </recommendedName>
</protein>
<feature type="chain" id="PRO_1000080762" description="Transcriptional repressor NrdR">
    <location>
        <begin position="1"/>
        <end position="166"/>
    </location>
</feature>
<feature type="domain" description="ATP-cone" evidence="1">
    <location>
        <begin position="49"/>
        <end position="139"/>
    </location>
</feature>
<feature type="zinc finger region" evidence="1">
    <location>
        <begin position="3"/>
        <end position="34"/>
    </location>
</feature>